<keyword id="KW-0963">Cytoplasm</keyword>
<keyword id="KW-0417">Keratinization</keyword>
<keyword id="KW-1185">Reference proteome</keyword>
<keyword id="KW-0677">Repeat</keyword>
<proteinExistence type="evidence at transcript level"/>
<dbReference type="EMBL" id="X91825">
    <property type="protein sequence ID" value="CAA62934.1"/>
    <property type="molecule type" value="mRNA"/>
</dbReference>
<dbReference type="EMBL" id="U66820">
    <property type="protein sequence ID" value="AAD10127.1"/>
    <property type="molecule type" value="Genomic_DNA"/>
</dbReference>
<dbReference type="EMBL" id="AK003398">
    <property type="protein sequence ID" value="BAB22763.1"/>
    <property type="molecule type" value="mRNA"/>
</dbReference>
<dbReference type="EMBL" id="AK009752">
    <property type="protein sequence ID" value="BAB26478.1"/>
    <property type="molecule type" value="mRNA"/>
</dbReference>
<dbReference type="EMBL" id="BC119288">
    <property type="protein sequence ID" value="AAI19289.1"/>
    <property type="molecule type" value="mRNA"/>
</dbReference>
<dbReference type="EMBL" id="BC119290">
    <property type="protein sequence ID" value="AAI19291.1"/>
    <property type="molecule type" value="mRNA"/>
</dbReference>
<dbReference type="CCDS" id="CCDS17557.1"/>
<dbReference type="RefSeq" id="NP_033291.1">
    <property type="nucleotide sequence ID" value="NM_009265.5"/>
</dbReference>
<dbReference type="FunCoup" id="Q62267">
    <property type="interactions" value="12"/>
</dbReference>
<dbReference type="STRING" id="10090.ENSMUSP00000058617"/>
<dbReference type="PhosphoSitePlus" id="Q62267"/>
<dbReference type="PaxDb" id="10090-ENSMUSP00000058617"/>
<dbReference type="PeptideAtlas" id="Q62267"/>
<dbReference type="ProteomicsDB" id="261627"/>
<dbReference type="DNASU" id="20754"/>
<dbReference type="Ensembl" id="ENSMUST00000062160.4">
    <property type="protein sequence ID" value="ENSMUSP00000058617.3"/>
    <property type="gene ID" value="ENSMUSG00000048455.10"/>
</dbReference>
<dbReference type="GeneID" id="20754"/>
<dbReference type="KEGG" id="mmu:20754"/>
<dbReference type="UCSC" id="uc008qeb.1">
    <property type="organism name" value="mouse"/>
</dbReference>
<dbReference type="AGR" id="MGI:106659"/>
<dbReference type="CTD" id="6699"/>
<dbReference type="MGI" id="MGI:106659">
    <property type="gene designation" value="Sprr1b"/>
</dbReference>
<dbReference type="VEuPathDB" id="HostDB:ENSMUSG00000048455"/>
<dbReference type="eggNOG" id="ENOG502SCIR">
    <property type="taxonomic scope" value="Eukaryota"/>
</dbReference>
<dbReference type="GeneTree" id="ENSGT00940000163019"/>
<dbReference type="HOGENOM" id="CLU_101829_1_0_1"/>
<dbReference type="InParanoid" id="Q62267"/>
<dbReference type="OMA" id="LHEQQVK"/>
<dbReference type="OrthoDB" id="9837279at2759"/>
<dbReference type="PhylomeDB" id="Q62267"/>
<dbReference type="TreeFam" id="TF338205"/>
<dbReference type="BioGRID-ORCS" id="20754">
    <property type="hits" value="1 hit in 79 CRISPR screens"/>
</dbReference>
<dbReference type="PRO" id="PR:Q62267"/>
<dbReference type="Proteomes" id="UP000000589">
    <property type="component" value="Chromosome 3"/>
</dbReference>
<dbReference type="RNAct" id="Q62267">
    <property type="molecule type" value="protein"/>
</dbReference>
<dbReference type="Bgee" id="ENSMUSG00000048455">
    <property type="expression patterns" value="Expressed in skin of snout and 58 other cell types or tissues"/>
</dbReference>
<dbReference type="GO" id="GO:0001533">
    <property type="term" value="C:cornified envelope"/>
    <property type="evidence" value="ECO:0000304"/>
    <property type="project" value="MGI"/>
</dbReference>
<dbReference type="GO" id="GO:0005737">
    <property type="term" value="C:cytoplasm"/>
    <property type="evidence" value="ECO:0007669"/>
    <property type="project" value="UniProtKB-SubCell"/>
</dbReference>
<dbReference type="GO" id="GO:0005200">
    <property type="term" value="F:structural constituent of cytoskeleton"/>
    <property type="evidence" value="ECO:0000304"/>
    <property type="project" value="MGI"/>
</dbReference>
<dbReference type="GO" id="GO:0031424">
    <property type="term" value="P:keratinization"/>
    <property type="evidence" value="ECO:0007669"/>
    <property type="project" value="UniProtKB-KW"/>
</dbReference>
<dbReference type="GO" id="GO:0008360">
    <property type="term" value="P:regulation of cell shape"/>
    <property type="evidence" value="ECO:0000304"/>
    <property type="project" value="MGI"/>
</dbReference>
<dbReference type="Pfam" id="PF02389">
    <property type="entry name" value="Cornifin"/>
    <property type="match status" value="1"/>
</dbReference>
<dbReference type="PRINTS" id="PR00021">
    <property type="entry name" value="PRORICH"/>
</dbReference>
<comment type="function">
    <text>Cross-linked envelope protein of keratinocytes. It is a keratinocyte protein that first appears in the cell cytosol, but ultimately becomes cross-linked to membrane proteins by transglutaminase. All that results in the formation of an insoluble envelope beneath the plasma membrane.</text>
</comment>
<comment type="subcellular location">
    <subcellularLocation>
        <location>Cytoplasm</location>
    </subcellularLocation>
</comment>
<comment type="tissue specificity">
    <text>Expressed in fetal periderm, hair follicles and in the thickened epidermis of the lip and footpad. Also present in the epithelia of various tissues such as the penis, vagina, forestomach, tongue and esophagus.</text>
</comment>
<comment type="developmental stage">
    <text>First detected in fetal skin around day 16 and expression continues throughout newborn and adult stages.</text>
</comment>
<comment type="similarity">
    <text evidence="2">Belongs to the cornifin (SPRR) family.</text>
</comment>
<sequence length="153" mass="16636">MSSHQQKQPCTAPPQLHEQQVKQPCQPPPPEPCVSQVKTPCDTKVPEPCHPKAPEPCHPKAPEPCHPKAPEPCHPKAPEPCHPKAPEPCHPKAPEPCHPKAPEPCHPKAPEPCHPKVPEPCLPKAPEPCQPIVPEPCPSTVTPILAQQKTKQK</sequence>
<name>SPR1B_MOUSE</name>
<evidence type="ECO:0000256" key="1">
    <source>
        <dbReference type="SAM" id="MobiDB-lite"/>
    </source>
</evidence>
<evidence type="ECO:0000305" key="2"/>
<organism>
    <name type="scientific">Mus musculus</name>
    <name type="common">Mouse</name>
    <dbReference type="NCBI Taxonomy" id="10090"/>
    <lineage>
        <taxon>Eukaryota</taxon>
        <taxon>Metazoa</taxon>
        <taxon>Chordata</taxon>
        <taxon>Craniata</taxon>
        <taxon>Vertebrata</taxon>
        <taxon>Euteleostomi</taxon>
        <taxon>Mammalia</taxon>
        <taxon>Eutheria</taxon>
        <taxon>Euarchontoglires</taxon>
        <taxon>Glires</taxon>
        <taxon>Rodentia</taxon>
        <taxon>Myomorpha</taxon>
        <taxon>Muroidea</taxon>
        <taxon>Muridae</taxon>
        <taxon>Murinae</taxon>
        <taxon>Mus</taxon>
        <taxon>Mus</taxon>
    </lineage>
</organism>
<gene>
    <name type="primary">Sprr1b</name>
</gene>
<accession>Q62267</accession>
<accession>Q0VEC0</accession>
<feature type="chain" id="PRO_0000150000" description="Cornifin-B">
    <location>
        <begin position="1"/>
        <end position="153"/>
    </location>
</feature>
<feature type="repeat" description="1">
    <location>
        <begin position="27"/>
        <end position="34"/>
    </location>
</feature>
<feature type="repeat" description="2">
    <location>
        <begin position="35"/>
        <end position="42"/>
    </location>
</feature>
<feature type="repeat" description="3">
    <location>
        <begin position="43"/>
        <end position="50"/>
    </location>
</feature>
<feature type="repeat" description="4">
    <location>
        <begin position="51"/>
        <end position="58"/>
    </location>
</feature>
<feature type="repeat" description="5">
    <location>
        <begin position="59"/>
        <end position="66"/>
    </location>
</feature>
<feature type="repeat" description="6">
    <location>
        <begin position="67"/>
        <end position="74"/>
    </location>
</feature>
<feature type="repeat" description="7">
    <location>
        <begin position="75"/>
        <end position="82"/>
    </location>
</feature>
<feature type="repeat" description="8">
    <location>
        <begin position="83"/>
        <end position="90"/>
    </location>
</feature>
<feature type="repeat" description="9">
    <location>
        <begin position="91"/>
        <end position="98"/>
    </location>
</feature>
<feature type="repeat" description="10">
    <location>
        <begin position="99"/>
        <end position="106"/>
    </location>
</feature>
<feature type="repeat" description="11">
    <location>
        <begin position="107"/>
        <end position="114"/>
    </location>
</feature>
<feature type="repeat" description="12">
    <location>
        <begin position="115"/>
        <end position="122"/>
    </location>
</feature>
<feature type="repeat" description="13">
    <location>
        <begin position="123"/>
        <end position="130"/>
    </location>
</feature>
<feature type="repeat" description="14">
    <location>
        <begin position="131"/>
        <end position="138"/>
    </location>
</feature>
<feature type="region of interest" description="Disordered" evidence="1">
    <location>
        <begin position="1"/>
        <end position="35"/>
    </location>
</feature>
<feature type="region of interest" description="14 X 8 AA approximate tandem repeats">
    <location>
        <begin position="27"/>
        <end position="138"/>
    </location>
</feature>
<feature type="region of interest" description="Disordered" evidence="1">
    <location>
        <begin position="49"/>
        <end position="85"/>
    </location>
</feature>
<protein>
    <recommendedName>
        <fullName>Cornifin-B</fullName>
    </recommendedName>
    <alternativeName>
        <fullName>Small proline-rich protein 1B</fullName>
        <shortName>SPR1 B</shortName>
        <shortName>SPR1B</shortName>
    </alternativeName>
</protein>
<reference key="1">
    <citation type="journal article" date="1996" name="J. Invest. Dermatol.">
        <title>Sequence and expression patterns of mouse SPR1: correlation of expression with epithelial function.</title>
        <authorList>
            <person name="Kartasova T."/>
            <person name="Darwiche N."/>
            <person name="Kohno Y."/>
            <person name="Koizumi H."/>
            <person name="Osada S."/>
            <person name="Huh N.-H."/>
            <person name="Lichti U."/>
            <person name="Steinert P.M."/>
            <person name="Kuroki T."/>
        </authorList>
    </citation>
    <scope>NUCLEOTIDE SEQUENCE [MRNA]</scope>
    <source>
        <strain>CD-1</strain>
    </source>
</reference>
<reference key="2">
    <citation type="journal article" date="1998" name="Gene">
        <title>Structure and organization of the genes encoding mouse small proline-rich proteins, mSPRR1A and 1B.</title>
        <authorList>
            <person name="Reddy S.P."/>
            <person name="Konkin T."/>
            <person name="Wu R."/>
        </authorList>
    </citation>
    <scope>NUCLEOTIDE SEQUENCE [GENOMIC DNA]</scope>
    <source>
        <strain>129/SvJ</strain>
    </source>
</reference>
<reference key="3">
    <citation type="journal article" date="2005" name="Science">
        <title>The transcriptional landscape of the mammalian genome.</title>
        <authorList>
            <person name="Carninci P."/>
            <person name="Kasukawa T."/>
            <person name="Katayama S."/>
            <person name="Gough J."/>
            <person name="Frith M.C."/>
            <person name="Maeda N."/>
            <person name="Oyama R."/>
            <person name="Ravasi T."/>
            <person name="Lenhard B."/>
            <person name="Wells C."/>
            <person name="Kodzius R."/>
            <person name="Shimokawa K."/>
            <person name="Bajic V.B."/>
            <person name="Brenner S.E."/>
            <person name="Batalov S."/>
            <person name="Forrest A.R."/>
            <person name="Zavolan M."/>
            <person name="Davis M.J."/>
            <person name="Wilming L.G."/>
            <person name="Aidinis V."/>
            <person name="Allen J.E."/>
            <person name="Ambesi-Impiombato A."/>
            <person name="Apweiler R."/>
            <person name="Aturaliya R.N."/>
            <person name="Bailey T.L."/>
            <person name="Bansal M."/>
            <person name="Baxter L."/>
            <person name="Beisel K.W."/>
            <person name="Bersano T."/>
            <person name="Bono H."/>
            <person name="Chalk A.M."/>
            <person name="Chiu K.P."/>
            <person name="Choudhary V."/>
            <person name="Christoffels A."/>
            <person name="Clutterbuck D.R."/>
            <person name="Crowe M.L."/>
            <person name="Dalla E."/>
            <person name="Dalrymple B.P."/>
            <person name="de Bono B."/>
            <person name="Della Gatta G."/>
            <person name="di Bernardo D."/>
            <person name="Down T."/>
            <person name="Engstrom P."/>
            <person name="Fagiolini M."/>
            <person name="Faulkner G."/>
            <person name="Fletcher C.F."/>
            <person name="Fukushima T."/>
            <person name="Furuno M."/>
            <person name="Futaki S."/>
            <person name="Gariboldi M."/>
            <person name="Georgii-Hemming P."/>
            <person name="Gingeras T.R."/>
            <person name="Gojobori T."/>
            <person name="Green R.E."/>
            <person name="Gustincich S."/>
            <person name="Harbers M."/>
            <person name="Hayashi Y."/>
            <person name="Hensch T.K."/>
            <person name="Hirokawa N."/>
            <person name="Hill D."/>
            <person name="Huminiecki L."/>
            <person name="Iacono M."/>
            <person name="Ikeo K."/>
            <person name="Iwama A."/>
            <person name="Ishikawa T."/>
            <person name="Jakt M."/>
            <person name="Kanapin A."/>
            <person name="Katoh M."/>
            <person name="Kawasawa Y."/>
            <person name="Kelso J."/>
            <person name="Kitamura H."/>
            <person name="Kitano H."/>
            <person name="Kollias G."/>
            <person name="Krishnan S.P."/>
            <person name="Kruger A."/>
            <person name="Kummerfeld S.K."/>
            <person name="Kurochkin I.V."/>
            <person name="Lareau L.F."/>
            <person name="Lazarevic D."/>
            <person name="Lipovich L."/>
            <person name="Liu J."/>
            <person name="Liuni S."/>
            <person name="McWilliam S."/>
            <person name="Madan Babu M."/>
            <person name="Madera M."/>
            <person name="Marchionni L."/>
            <person name="Matsuda H."/>
            <person name="Matsuzawa S."/>
            <person name="Miki H."/>
            <person name="Mignone F."/>
            <person name="Miyake S."/>
            <person name="Morris K."/>
            <person name="Mottagui-Tabar S."/>
            <person name="Mulder N."/>
            <person name="Nakano N."/>
            <person name="Nakauchi H."/>
            <person name="Ng P."/>
            <person name="Nilsson R."/>
            <person name="Nishiguchi S."/>
            <person name="Nishikawa S."/>
            <person name="Nori F."/>
            <person name="Ohara O."/>
            <person name="Okazaki Y."/>
            <person name="Orlando V."/>
            <person name="Pang K.C."/>
            <person name="Pavan W.J."/>
            <person name="Pavesi G."/>
            <person name="Pesole G."/>
            <person name="Petrovsky N."/>
            <person name="Piazza S."/>
            <person name="Reed J."/>
            <person name="Reid J.F."/>
            <person name="Ring B.Z."/>
            <person name="Ringwald M."/>
            <person name="Rost B."/>
            <person name="Ruan Y."/>
            <person name="Salzberg S.L."/>
            <person name="Sandelin A."/>
            <person name="Schneider C."/>
            <person name="Schoenbach C."/>
            <person name="Sekiguchi K."/>
            <person name="Semple C.A."/>
            <person name="Seno S."/>
            <person name="Sessa L."/>
            <person name="Sheng Y."/>
            <person name="Shibata Y."/>
            <person name="Shimada H."/>
            <person name="Shimada K."/>
            <person name="Silva D."/>
            <person name="Sinclair B."/>
            <person name="Sperling S."/>
            <person name="Stupka E."/>
            <person name="Sugiura K."/>
            <person name="Sultana R."/>
            <person name="Takenaka Y."/>
            <person name="Taki K."/>
            <person name="Tammoja K."/>
            <person name="Tan S.L."/>
            <person name="Tang S."/>
            <person name="Taylor M.S."/>
            <person name="Tegner J."/>
            <person name="Teichmann S.A."/>
            <person name="Ueda H.R."/>
            <person name="van Nimwegen E."/>
            <person name="Verardo R."/>
            <person name="Wei C.L."/>
            <person name="Yagi K."/>
            <person name="Yamanishi H."/>
            <person name="Zabarovsky E."/>
            <person name="Zhu S."/>
            <person name="Zimmer A."/>
            <person name="Hide W."/>
            <person name="Bult C."/>
            <person name="Grimmond S.M."/>
            <person name="Teasdale R.D."/>
            <person name="Liu E.T."/>
            <person name="Brusic V."/>
            <person name="Quackenbush J."/>
            <person name="Wahlestedt C."/>
            <person name="Mattick J.S."/>
            <person name="Hume D.A."/>
            <person name="Kai C."/>
            <person name="Sasaki D."/>
            <person name="Tomaru Y."/>
            <person name="Fukuda S."/>
            <person name="Kanamori-Katayama M."/>
            <person name="Suzuki M."/>
            <person name="Aoki J."/>
            <person name="Arakawa T."/>
            <person name="Iida J."/>
            <person name="Imamura K."/>
            <person name="Itoh M."/>
            <person name="Kato T."/>
            <person name="Kawaji H."/>
            <person name="Kawagashira N."/>
            <person name="Kawashima T."/>
            <person name="Kojima M."/>
            <person name="Kondo S."/>
            <person name="Konno H."/>
            <person name="Nakano K."/>
            <person name="Ninomiya N."/>
            <person name="Nishio T."/>
            <person name="Okada M."/>
            <person name="Plessy C."/>
            <person name="Shibata K."/>
            <person name="Shiraki T."/>
            <person name="Suzuki S."/>
            <person name="Tagami M."/>
            <person name="Waki K."/>
            <person name="Watahiki A."/>
            <person name="Okamura-Oho Y."/>
            <person name="Suzuki H."/>
            <person name="Kawai J."/>
            <person name="Hayashizaki Y."/>
        </authorList>
    </citation>
    <scope>NUCLEOTIDE SEQUENCE [LARGE SCALE MRNA]</scope>
    <source>
        <strain>C57BL/6J</strain>
        <tissue>Embryo</tissue>
        <tissue>Tongue</tissue>
    </source>
</reference>
<reference key="4">
    <citation type="journal article" date="2004" name="Genome Res.">
        <title>The status, quality, and expansion of the NIH full-length cDNA project: the Mammalian Gene Collection (MGC).</title>
        <authorList>
            <consortium name="The MGC Project Team"/>
        </authorList>
    </citation>
    <scope>NUCLEOTIDE SEQUENCE [LARGE SCALE MRNA]</scope>
    <source>
        <tissue>Brain</tissue>
    </source>
</reference>